<reference key="1">
    <citation type="submission" date="2004-11" db="EMBL/GenBank/DDBJ databases">
        <authorList>
            <consortium name="The German cDNA consortium"/>
        </authorList>
    </citation>
    <scope>NUCLEOTIDE SEQUENCE [LARGE SCALE MRNA]</scope>
    <source>
        <tissue>Brain cortex</tissue>
    </source>
</reference>
<proteinExistence type="inferred from homology"/>
<dbReference type="EMBL" id="CR857518">
    <property type="protein sequence ID" value="CAH89800.1"/>
    <property type="molecule type" value="mRNA"/>
</dbReference>
<dbReference type="RefSeq" id="NP_001124830.1">
    <property type="nucleotide sequence ID" value="NM_001131358.1"/>
</dbReference>
<dbReference type="SMR" id="Q5REK7"/>
<dbReference type="FunCoup" id="Q5REK7">
    <property type="interactions" value="83"/>
</dbReference>
<dbReference type="STRING" id="9601.ENSPPYP00000003040"/>
<dbReference type="GeneID" id="100171688"/>
<dbReference type="KEGG" id="pon:100171688"/>
<dbReference type="CTD" id="119032"/>
<dbReference type="HOGENOM" id="CLU_150749_1_0_1"/>
<dbReference type="InParanoid" id="Q5REK7"/>
<dbReference type="OrthoDB" id="5567844at2759"/>
<dbReference type="Proteomes" id="UP000001595">
    <property type="component" value="Unplaced"/>
</dbReference>
<dbReference type="GO" id="GO:0099078">
    <property type="term" value="C:BORC complex"/>
    <property type="evidence" value="ECO:0000250"/>
    <property type="project" value="UniProtKB"/>
</dbReference>
<dbReference type="GO" id="GO:0005765">
    <property type="term" value="C:lysosomal membrane"/>
    <property type="evidence" value="ECO:0007669"/>
    <property type="project" value="UniProtKB-SubCell"/>
</dbReference>
<dbReference type="InterPro" id="IPR032143">
    <property type="entry name" value="BORCS7"/>
</dbReference>
<dbReference type="PANTHER" id="PTHR31397:SF3">
    <property type="entry name" value="BLOC-1-RELATED COMPLEX SUBUNIT 7"/>
    <property type="match status" value="1"/>
</dbReference>
<dbReference type="PANTHER" id="PTHR31397">
    <property type="entry name" value="BLOC-1-RELATED COMPLEX SUBUNIT 7 BORSC7"/>
    <property type="match status" value="1"/>
</dbReference>
<dbReference type="Pfam" id="PF16088">
    <property type="entry name" value="BORCS7"/>
    <property type="match status" value="1"/>
</dbReference>
<evidence type="ECO:0000250" key="1">
    <source>
        <dbReference type="UniProtKB" id="Q96B45"/>
    </source>
</evidence>
<evidence type="ECO:0000305" key="2"/>
<gene>
    <name evidence="1" type="primary">BORCS7</name>
</gene>
<protein>
    <recommendedName>
        <fullName evidence="2">BLOC-1-related complex subunit 7</fullName>
    </recommendedName>
</protein>
<sequence>MMATGTADSQARFGQSVKGLLTEKVTTCGTDVIALTKQVLKGSRSSELLGQAARNMVLQEDAILHSEDSLRKMAIITTHLQYQQEAIQKNVEQSSDLQDQLNHLLK</sequence>
<organism>
    <name type="scientific">Pongo abelii</name>
    <name type="common">Sumatran orangutan</name>
    <name type="synonym">Pongo pygmaeus abelii</name>
    <dbReference type="NCBI Taxonomy" id="9601"/>
    <lineage>
        <taxon>Eukaryota</taxon>
        <taxon>Metazoa</taxon>
        <taxon>Chordata</taxon>
        <taxon>Craniata</taxon>
        <taxon>Vertebrata</taxon>
        <taxon>Euteleostomi</taxon>
        <taxon>Mammalia</taxon>
        <taxon>Eutheria</taxon>
        <taxon>Euarchontoglires</taxon>
        <taxon>Primates</taxon>
        <taxon>Haplorrhini</taxon>
        <taxon>Catarrhini</taxon>
        <taxon>Hominidae</taxon>
        <taxon>Pongo</taxon>
    </lineage>
</organism>
<name>BORC7_PONAB</name>
<feature type="chain" id="PRO_0000089789" description="BLOC-1-related complex subunit 7">
    <location>
        <begin position="1"/>
        <end position="106"/>
    </location>
</feature>
<accession>Q5REK7</accession>
<keyword id="KW-0458">Lysosome</keyword>
<keyword id="KW-0472">Membrane</keyword>
<keyword id="KW-1185">Reference proteome</keyword>
<comment type="function">
    <text evidence="1">As part of the BORC complex may play a role in lysosomes movement and localization at the cell periphery. Associated with the cytosolic face of lysosomes, the BORC complex may recruit ARL8B and couple lysosomes to microtubule plus-end-directed kinesin motor.</text>
</comment>
<comment type="subunit">
    <text evidence="1">Component of the BLOC-one-related complex (BORC) which is composed of BLOC1S1, BLOC1S2, BORCS5, BORCS6, BORCS7, BORCS8, KXD1 and SNAPIN.</text>
</comment>
<comment type="subcellular location">
    <subcellularLocation>
        <location evidence="1">Lysosome membrane</location>
    </subcellularLocation>
</comment>
<comment type="similarity">
    <text evidence="2">Belongs to the BORCS7 family.</text>
</comment>